<feature type="transit peptide" description="Chloroplast" evidence="1">
    <location>
        <begin position="1"/>
        <end position="57"/>
    </location>
</feature>
<feature type="chain" id="PRO_0000447851" description="Lipoxygenase 2, chloroplastic">
    <location>
        <begin position="58"/>
        <end position="899"/>
    </location>
</feature>
<feature type="domain" description="PLAT" evidence="2">
    <location>
        <begin position="83"/>
        <end position="203"/>
    </location>
</feature>
<feature type="domain" description="Lipoxygenase" evidence="3">
    <location>
        <begin position="206"/>
        <end position="899"/>
    </location>
</feature>
<feature type="region of interest" description="Disordered" evidence="4">
    <location>
        <begin position="252"/>
        <end position="286"/>
    </location>
</feature>
<feature type="binding site" evidence="3">
    <location>
        <position position="557"/>
    </location>
    <ligand>
        <name>Fe cation</name>
        <dbReference type="ChEBI" id="CHEBI:24875"/>
        <note>catalytic</note>
    </ligand>
</feature>
<feature type="binding site" evidence="3">
    <location>
        <position position="562"/>
    </location>
    <ligand>
        <name>Fe cation</name>
        <dbReference type="ChEBI" id="CHEBI:24875"/>
        <note>catalytic</note>
    </ligand>
</feature>
<feature type="binding site" evidence="3">
    <location>
        <position position="749"/>
    </location>
    <ligand>
        <name>Fe cation</name>
        <dbReference type="ChEBI" id="CHEBI:24875"/>
        <note>catalytic</note>
    </ligand>
</feature>
<feature type="binding site" evidence="3">
    <location>
        <position position="753"/>
    </location>
    <ligand>
        <name>Fe cation</name>
        <dbReference type="ChEBI" id="CHEBI:24875"/>
        <note>catalytic</note>
    </ligand>
</feature>
<feature type="binding site" evidence="3">
    <location>
        <position position="899"/>
    </location>
    <ligand>
        <name>Fe cation</name>
        <dbReference type="ChEBI" id="CHEBI:24875"/>
        <note>catalytic</note>
    </ligand>
</feature>
<feature type="unsure residue" description="E or Q" evidence="8">
    <location>
        <position position="448"/>
    </location>
</feature>
<reference key="1">
    <citation type="journal article" date="2013" name="Lipids">
        <title>A trichome-specific linoleate lipoxygenase expressed during pyrethrin biosynthesis in pyrethrum.</title>
        <authorList>
            <person name="Ramirez A.M."/>
            <person name="Yang T."/>
            <person name="Bouwmeester H.J."/>
            <person name="Jongsma M.A."/>
        </authorList>
    </citation>
    <scope>NUCLEOTIDE SEQUENCE [MRNA]</scope>
    <scope>TISSUE SPECIFICITY</scope>
</reference>
<accession>R9WS04</accession>
<sequence>MLKPQIHKPHLVNKLPLGTPFIPSHASIASFSTTSLRTLSVQKCYRRYIRYTSSNIKAIMPDSIGKSIRKKCVVTVQPTISGALTAVTVGLLGTVADSVSDFLGRSFLLELVSSDLDSSGKEKDTVKAYATYDELDKESKLYKYQCEFEVPDDFGEIGAVLVQNERHRDAYVKNIVLDEIVTFTCDSWIHSKFDNPDKRIFFLNKSYLPSETPEGLKSLRQKDLESLRGNGEGERQSFDRIYDYDTYNDIGDPDTDSDMARPVLGGNEHPFPRRCRTGRKMTSTEPWSESRTTLPFYVPRDEDFAEIKQITRGATTLYSVLHGVIPALSSVLKDEDKGFPLFRDIELLYEKGVDIDPPPDSGTLSALPRLVKAITNSTKKVLQFETPRIKHKDSFSWFRDEEFCRQTLAGLNPYSIQLVTEWPLMSKLDPEVYGPAESAITKETVEEEIKGFMTXEEALEQKRLFLLDYHDLLLPYVNKVREIEGTTLYGSRTLMFLTCTGTLRPLAIELTRPPNNGKPQWKHVYTPCWDATDXWLWKLAKAHVLAHDSGYHQLVSHWLRTHCVTEPYIIATNRQLSKMHPIQRLLCPHLRYTMQINGLARLSLINANGIIESSFSPRKYSMQLSSDAYAQKWRFDHEALPADLISRGMAVEDESAPHGIKLTIEDYPFANDGLLLWDAIKQWATAYINHYYPQAKLVESDEELQAWWTEIRTVGHADKKDEPWWPQLKTQQDLIGVVSTIMWVSSGHHSAVNFGQYDFGGYFPNRPTIARTKMPNEDPTFEEWEAFMEKPEDVLLNCFPTQIQATKVMAILDVLSSHSPDEEYIGTSMEASWEAEPAIKSAFEEFCGRLKKLDDIIDSRNRDPILRNRTGAGLVQYQLLKPFSGHGVTGKGVPYSISI</sequence>
<comment type="function">
    <text evidence="3">Plant lipoxygenases may be involved in a number of diverse aspects of plant physiology including growth and development, pest resistance, and senescence or responses to wounding. Catalyzes the hydroperoxidation of lipids containing a cis,cis-1,4-pentadiene structure.</text>
</comment>
<comment type="cofactor">
    <cofactor evidence="3">
        <name>Fe cation</name>
        <dbReference type="ChEBI" id="CHEBI:24875"/>
    </cofactor>
    <text evidence="3">Binds 1 Fe cation per subunit.</text>
</comment>
<comment type="pathway">
    <text evidence="3">Lipid metabolism; oxylipin biosynthesis.</text>
</comment>
<comment type="subcellular location">
    <subcellularLocation>
        <location evidence="1">Plastid</location>
        <location evidence="1">Chloroplast</location>
    </subcellularLocation>
</comment>
<comment type="tissue specificity">
    <text evidence="5">Confined to glandular trichomes in flowers.</text>
</comment>
<comment type="similarity">
    <text evidence="7">Belongs to the lipoxygenase family.</text>
</comment>
<gene>
    <name evidence="6" type="primary">LOX2</name>
</gene>
<keyword id="KW-0150">Chloroplast</keyword>
<keyword id="KW-0223">Dioxygenase</keyword>
<keyword id="KW-0275">Fatty acid biosynthesis</keyword>
<keyword id="KW-0276">Fatty acid metabolism</keyword>
<keyword id="KW-0408">Iron</keyword>
<keyword id="KW-0444">Lipid biosynthesis</keyword>
<keyword id="KW-0443">Lipid metabolism</keyword>
<keyword id="KW-0479">Metal-binding</keyword>
<keyword id="KW-0560">Oxidoreductase</keyword>
<keyword id="KW-0925">Oxylipin biosynthesis</keyword>
<keyword id="KW-0934">Plastid</keyword>
<keyword id="KW-0809">Transit peptide</keyword>
<dbReference type="EC" id="1.13.11.-" evidence="3"/>
<dbReference type="EMBL" id="KC441524">
    <property type="protein sequence ID" value="AGO03786.1"/>
    <property type="molecule type" value="mRNA"/>
</dbReference>
<dbReference type="UniPathway" id="UPA00382"/>
<dbReference type="GO" id="GO:0009507">
    <property type="term" value="C:chloroplast"/>
    <property type="evidence" value="ECO:0007669"/>
    <property type="project" value="UniProtKB-SubCell"/>
</dbReference>
<dbReference type="GO" id="GO:0046872">
    <property type="term" value="F:metal ion binding"/>
    <property type="evidence" value="ECO:0007669"/>
    <property type="project" value="UniProtKB-KW"/>
</dbReference>
<dbReference type="GO" id="GO:0016702">
    <property type="term" value="F:oxidoreductase activity, acting on single donors with incorporation of molecular oxygen, incorporation of two atoms of oxygen"/>
    <property type="evidence" value="ECO:0007669"/>
    <property type="project" value="InterPro"/>
</dbReference>
<dbReference type="GO" id="GO:0006633">
    <property type="term" value="P:fatty acid biosynthetic process"/>
    <property type="evidence" value="ECO:0007669"/>
    <property type="project" value="UniProtKB-KW"/>
</dbReference>
<dbReference type="GO" id="GO:0034440">
    <property type="term" value="P:lipid oxidation"/>
    <property type="evidence" value="ECO:0007669"/>
    <property type="project" value="InterPro"/>
</dbReference>
<dbReference type="GO" id="GO:0031408">
    <property type="term" value="P:oxylipin biosynthetic process"/>
    <property type="evidence" value="ECO:0007669"/>
    <property type="project" value="UniProtKB-UniPathway"/>
</dbReference>
<dbReference type="CDD" id="cd01751">
    <property type="entry name" value="PLAT_LH2"/>
    <property type="match status" value="1"/>
</dbReference>
<dbReference type="FunFam" id="1.20.245.10:FF:000002">
    <property type="entry name" value="Lipoxygenase"/>
    <property type="match status" value="1"/>
</dbReference>
<dbReference type="FunFam" id="3.10.450.60:FF:000005">
    <property type="entry name" value="Lipoxygenase"/>
    <property type="match status" value="1"/>
</dbReference>
<dbReference type="Gene3D" id="3.10.450.60">
    <property type="match status" value="1"/>
</dbReference>
<dbReference type="Gene3D" id="4.10.375.10">
    <property type="entry name" value="Lipoxygenase-1, Domain 2"/>
    <property type="match status" value="1"/>
</dbReference>
<dbReference type="Gene3D" id="4.10.372.10">
    <property type="entry name" value="Lipoxygenase-1, Domain 3"/>
    <property type="match status" value="1"/>
</dbReference>
<dbReference type="Gene3D" id="1.20.245.10">
    <property type="entry name" value="Lipoxygenase-1, Domain 5"/>
    <property type="match status" value="1"/>
</dbReference>
<dbReference type="Gene3D" id="2.60.60.20">
    <property type="entry name" value="PLAT/LH2 domain"/>
    <property type="match status" value="1"/>
</dbReference>
<dbReference type="InterPro" id="IPR000907">
    <property type="entry name" value="LipOase"/>
</dbReference>
<dbReference type="InterPro" id="IPR013819">
    <property type="entry name" value="LipOase_C"/>
</dbReference>
<dbReference type="InterPro" id="IPR036226">
    <property type="entry name" value="LipOase_C_sf"/>
</dbReference>
<dbReference type="InterPro" id="IPR020834">
    <property type="entry name" value="LipOase_CS"/>
</dbReference>
<dbReference type="InterPro" id="IPR020833">
    <property type="entry name" value="LipOase_Fe_BS"/>
</dbReference>
<dbReference type="InterPro" id="IPR001246">
    <property type="entry name" value="LipOase_plant"/>
</dbReference>
<dbReference type="InterPro" id="IPR042057">
    <property type="entry name" value="Lipoxy_PLAT/LH2"/>
</dbReference>
<dbReference type="InterPro" id="IPR027433">
    <property type="entry name" value="Lipoxygenase_dom_3"/>
</dbReference>
<dbReference type="InterPro" id="IPR001024">
    <property type="entry name" value="PLAT/LH2_dom"/>
</dbReference>
<dbReference type="InterPro" id="IPR036392">
    <property type="entry name" value="PLAT/LH2_dom_sf"/>
</dbReference>
<dbReference type="PANTHER" id="PTHR11771">
    <property type="entry name" value="LIPOXYGENASE"/>
    <property type="match status" value="1"/>
</dbReference>
<dbReference type="Pfam" id="PF00305">
    <property type="entry name" value="Lipoxygenase"/>
    <property type="match status" value="1"/>
</dbReference>
<dbReference type="Pfam" id="PF01477">
    <property type="entry name" value="PLAT"/>
    <property type="match status" value="1"/>
</dbReference>
<dbReference type="PRINTS" id="PR00087">
    <property type="entry name" value="LIPOXYGENASE"/>
</dbReference>
<dbReference type="PRINTS" id="PR00468">
    <property type="entry name" value="PLTLPOXGNASE"/>
</dbReference>
<dbReference type="SMART" id="SM00308">
    <property type="entry name" value="LH2"/>
    <property type="match status" value="1"/>
</dbReference>
<dbReference type="SUPFAM" id="SSF49723">
    <property type="entry name" value="Lipase/lipooxygenase domain (PLAT/LH2 domain)"/>
    <property type="match status" value="1"/>
</dbReference>
<dbReference type="SUPFAM" id="SSF48484">
    <property type="entry name" value="Lipoxigenase"/>
    <property type="match status" value="1"/>
</dbReference>
<dbReference type="PROSITE" id="PS00711">
    <property type="entry name" value="LIPOXYGENASE_1"/>
    <property type="match status" value="1"/>
</dbReference>
<dbReference type="PROSITE" id="PS00081">
    <property type="entry name" value="LIPOXYGENASE_2"/>
    <property type="match status" value="1"/>
</dbReference>
<dbReference type="PROSITE" id="PS51393">
    <property type="entry name" value="LIPOXYGENASE_3"/>
    <property type="match status" value="1"/>
</dbReference>
<dbReference type="PROSITE" id="PS50095">
    <property type="entry name" value="PLAT"/>
    <property type="match status" value="1"/>
</dbReference>
<organism>
    <name type="scientific">Tanacetum cinerariifolium</name>
    <name type="common">Dalmatian daisy</name>
    <name type="synonym">Chrysanthemum cinerariifolium</name>
    <dbReference type="NCBI Taxonomy" id="118510"/>
    <lineage>
        <taxon>Eukaryota</taxon>
        <taxon>Viridiplantae</taxon>
        <taxon>Streptophyta</taxon>
        <taxon>Embryophyta</taxon>
        <taxon>Tracheophyta</taxon>
        <taxon>Spermatophyta</taxon>
        <taxon>Magnoliopsida</taxon>
        <taxon>eudicotyledons</taxon>
        <taxon>Gunneridae</taxon>
        <taxon>Pentapetalae</taxon>
        <taxon>asterids</taxon>
        <taxon>campanulids</taxon>
        <taxon>Asterales</taxon>
        <taxon>Asteraceae</taxon>
        <taxon>Asteroideae</taxon>
        <taxon>Anthemideae</taxon>
        <taxon>Anthemidinae</taxon>
        <taxon>Tanacetum</taxon>
    </lineage>
</organism>
<evidence type="ECO:0000255" key="1"/>
<evidence type="ECO:0000255" key="2">
    <source>
        <dbReference type="PROSITE-ProRule" id="PRU00152"/>
    </source>
</evidence>
<evidence type="ECO:0000255" key="3">
    <source>
        <dbReference type="PROSITE-ProRule" id="PRU00726"/>
    </source>
</evidence>
<evidence type="ECO:0000256" key="4">
    <source>
        <dbReference type="SAM" id="MobiDB-lite"/>
    </source>
</evidence>
<evidence type="ECO:0000269" key="5">
    <source>
    </source>
</evidence>
<evidence type="ECO:0000303" key="6">
    <source>
    </source>
</evidence>
<evidence type="ECO:0000305" key="7"/>
<evidence type="ECO:0000312" key="8">
    <source>
        <dbReference type="EMBL" id="AGO03786.1"/>
    </source>
</evidence>
<name>LOX2_TANCI</name>
<protein>
    <recommendedName>
        <fullName evidence="6">Lipoxygenase 2, chloroplastic</fullName>
        <shortName evidence="6">TcLOX2</shortName>
        <ecNumber evidence="3">1.13.11.-</ecNumber>
    </recommendedName>
</protein>
<proteinExistence type="evidence at transcript level"/>